<comment type="similarity">
    <text evidence="1">Belongs to the bacterial ribosomal protein bL32 family.</text>
</comment>
<sequence length="55" mass="6176">MAVQQNKPTRSKRGMRRSHDALTTATLSVDKTSGETHLRHHITADGFYRGRKVIG</sequence>
<organism>
    <name type="scientific">Yersinia pestis bv. Antiqua (strain Antiqua)</name>
    <dbReference type="NCBI Taxonomy" id="360102"/>
    <lineage>
        <taxon>Bacteria</taxon>
        <taxon>Pseudomonadati</taxon>
        <taxon>Pseudomonadota</taxon>
        <taxon>Gammaproteobacteria</taxon>
        <taxon>Enterobacterales</taxon>
        <taxon>Yersiniaceae</taxon>
        <taxon>Yersinia</taxon>
    </lineage>
</organism>
<feature type="chain" id="PRO_0000296600" description="Large ribosomal subunit protein bL32">
    <location>
        <begin position="1"/>
        <end position="55"/>
    </location>
</feature>
<feature type="region of interest" description="Disordered" evidence="2">
    <location>
        <begin position="1"/>
        <end position="27"/>
    </location>
</feature>
<evidence type="ECO:0000255" key="1">
    <source>
        <dbReference type="HAMAP-Rule" id="MF_00340"/>
    </source>
</evidence>
<evidence type="ECO:0000256" key="2">
    <source>
        <dbReference type="SAM" id="MobiDB-lite"/>
    </source>
</evidence>
<evidence type="ECO:0000305" key="3"/>
<name>RL32_YERPA</name>
<proteinExistence type="inferred from homology"/>
<gene>
    <name evidence="1" type="primary">rpmF</name>
    <name type="ordered locus">YPA_1930</name>
</gene>
<protein>
    <recommendedName>
        <fullName evidence="1">Large ribosomal subunit protein bL32</fullName>
    </recommendedName>
    <alternativeName>
        <fullName evidence="3">50S ribosomal protein L32</fullName>
    </alternativeName>
</protein>
<reference key="1">
    <citation type="journal article" date="2006" name="J. Bacteriol.">
        <title>Complete genome sequence of Yersinia pestis strains Antiqua and Nepal516: evidence of gene reduction in an emerging pathogen.</title>
        <authorList>
            <person name="Chain P.S.G."/>
            <person name="Hu P."/>
            <person name="Malfatti S.A."/>
            <person name="Radnedge L."/>
            <person name="Larimer F."/>
            <person name="Vergez L.M."/>
            <person name="Worsham P."/>
            <person name="Chu M.C."/>
            <person name="Andersen G.L."/>
        </authorList>
    </citation>
    <scope>NUCLEOTIDE SEQUENCE [LARGE SCALE GENOMIC DNA]</scope>
    <source>
        <strain>Antiqua</strain>
    </source>
</reference>
<accession>Q1C6M6</accession>
<dbReference type="EMBL" id="CP000308">
    <property type="protein sequence ID" value="ABG13896.1"/>
    <property type="molecule type" value="Genomic_DNA"/>
</dbReference>
<dbReference type="RefSeq" id="WP_002210931.1">
    <property type="nucleotide sequence ID" value="NZ_CP009906.1"/>
</dbReference>
<dbReference type="SMR" id="Q1C6M6"/>
<dbReference type="GeneID" id="97455787"/>
<dbReference type="KEGG" id="ypa:YPA_1930"/>
<dbReference type="Proteomes" id="UP000001971">
    <property type="component" value="Chromosome"/>
</dbReference>
<dbReference type="GO" id="GO:0015934">
    <property type="term" value="C:large ribosomal subunit"/>
    <property type="evidence" value="ECO:0007669"/>
    <property type="project" value="InterPro"/>
</dbReference>
<dbReference type="GO" id="GO:0003735">
    <property type="term" value="F:structural constituent of ribosome"/>
    <property type="evidence" value="ECO:0007669"/>
    <property type="project" value="InterPro"/>
</dbReference>
<dbReference type="GO" id="GO:0006412">
    <property type="term" value="P:translation"/>
    <property type="evidence" value="ECO:0007669"/>
    <property type="project" value="UniProtKB-UniRule"/>
</dbReference>
<dbReference type="HAMAP" id="MF_00340">
    <property type="entry name" value="Ribosomal_bL32"/>
    <property type="match status" value="1"/>
</dbReference>
<dbReference type="InterPro" id="IPR002677">
    <property type="entry name" value="Ribosomal_bL32"/>
</dbReference>
<dbReference type="InterPro" id="IPR044957">
    <property type="entry name" value="Ribosomal_bL32_bact"/>
</dbReference>
<dbReference type="InterPro" id="IPR011332">
    <property type="entry name" value="Ribosomal_zn-bd"/>
</dbReference>
<dbReference type="NCBIfam" id="TIGR01031">
    <property type="entry name" value="rpmF_bact"/>
    <property type="match status" value="1"/>
</dbReference>
<dbReference type="PANTHER" id="PTHR35534">
    <property type="entry name" value="50S RIBOSOMAL PROTEIN L32"/>
    <property type="match status" value="1"/>
</dbReference>
<dbReference type="PANTHER" id="PTHR35534:SF1">
    <property type="entry name" value="LARGE RIBOSOMAL SUBUNIT PROTEIN BL32"/>
    <property type="match status" value="1"/>
</dbReference>
<dbReference type="Pfam" id="PF01783">
    <property type="entry name" value="Ribosomal_L32p"/>
    <property type="match status" value="1"/>
</dbReference>
<dbReference type="SUPFAM" id="SSF57829">
    <property type="entry name" value="Zn-binding ribosomal proteins"/>
    <property type="match status" value="1"/>
</dbReference>
<keyword id="KW-0687">Ribonucleoprotein</keyword>
<keyword id="KW-0689">Ribosomal protein</keyword>